<keyword id="KW-0963">Cytoplasm</keyword>
<keyword id="KW-0276">Fatty acid metabolism</keyword>
<keyword id="KW-0413">Isomerase</keyword>
<keyword id="KW-0442">Lipid degradation</keyword>
<keyword id="KW-0443">Lipid metabolism</keyword>
<keyword id="KW-0456">Lyase</keyword>
<keyword id="KW-0511">Multifunctional enzyme</keyword>
<keyword id="KW-0520">NAD</keyword>
<keyword id="KW-0560">Oxidoreductase</keyword>
<organism>
    <name type="scientific">Escherichia coli O6:K15:H31 (strain 536 / UPEC)</name>
    <dbReference type="NCBI Taxonomy" id="362663"/>
    <lineage>
        <taxon>Bacteria</taxon>
        <taxon>Pseudomonadati</taxon>
        <taxon>Pseudomonadota</taxon>
        <taxon>Gammaproteobacteria</taxon>
        <taxon>Enterobacterales</taxon>
        <taxon>Enterobacteriaceae</taxon>
        <taxon>Escherichia</taxon>
    </lineage>
</organism>
<protein>
    <recommendedName>
        <fullName evidence="1">Fatty acid oxidation complex subunit alpha</fullName>
    </recommendedName>
    <domain>
        <recommendedName>
            <fullName evidence="1">Enoyl-CoA hydratase/3-hydroxybutyryl-CoA epimerase</fullName>
            <ecNumber evidence="1">4.2.1.17</ecNumber>
            <ecNumber evidence="1">5.1.2.3</ecNumber>
        </recommendedName>
    </domain>
    <domain>
        <recommendedName>
            <fullName evidence="1">3-hydroxyacyl-CoA dehydrogenase</fullName>
            <ecNumber evidence="1">1.1.1.35</ecNumber>
        </recommendedName>
    </domain>
</protein>
<name>FADJ_ECOL5</name>
<accession>Q0TFA6</accession>
<comment type="function">
    <text evidence="1">Catalyzes the formation of a hydroxyacyl-CoA by addition of water on enoyl-CoA. Also exhibits 3-hydroxyacyl-CoA epimerase and 3-hydroxyacyl-CoA dehydrogenase activities.</text>
</comment>
<comment type="catalytic activity">
    <reaction evidence="1">
        <text>a (3S)-3-hydroxyacyl-CoA = a (2E)-enoyl-CoA + H2O</text>
        <dbReference type="Rhea" id="RHEA:16105"/>
        <dbReference type="ChEBI" id="CHEBI:15377"/>
        <dbReference type="ChEBI" id="CHEBI:57318"/>
        <dbReference type="ChEBI" id="CHEBI:58856"/>
        <dbReference type="EC" id="4.2.1.17"/>
    </reaction>
</comment>
<comment type="catalytic activity">
    <reaction evidence="1">
        <text>a 4-saturated-(3S)-3-hydroxyacyl-CoA = a (3E)-enoyl-CoA + H2O</text>
        <dbReference type="Rhea" id="RHEA:20724"/>
        <dbReference type="ChEBI" id="CHEBI:15377"/>
        <dbReference type="ChEBI" id="CHEBI:58521"/>
        <dbReference type="ChEBI" id="CHEBI:137480"/>
        <dbReference type="EC" id="4.2.1.17"/>
    </reaction>
</comment>
<comment type="catalytic activity">
    <reaction evidence="1">
        <text>a (3S)-3-hydroxyacyl-CoA + NAD(+) = a 3-oxoacyl-CoA + NADH + H(+)</text>
        <dbReference type="Rhea" id="RHEA:22432"/>
        <dbReference type="ChEBI" id="CHEBI:15378"/>
        <dbReference type="ChEBI" id="CHEBI:57318"/>
        <dbReference type="ChEBI" id="CHEBI:57540"/>
        <dbReference type="ChEBI" id="CHEBI:57945"/>
        <dbReference type="ChEBI" id="CHEBI:90726"/>
        <dbReference type="EC" id="1.1.1.35"/>
    </reaction>
</comment>
<comment type="catalytic activity">
    <reaction evidence="1">
        <text>(3S)-3-hydroxybutanoyl-CoA = (3R)-3-hydroxybutanoyl-CoA</text>
        <dbReference type="Rhea" id="RHEA:21760"/>
        <dbReference type="ChEBI" id="CHEBI:57315"/>
        <dbReference type="ChEBI" id="CHEBI:57316"/>
        <dbReference type="EC" id="5.1.2.3"/>
    </reaction>
</comment>
<comment type="pathway">
    <text evidence="1">Lipid metabolism; fatty acid beta-oxidation.</text>
</comment>
<comment type="subunit">
    <text evidence="1">Heterotetramer of two alpha chains (FadJ) and two beta chains (FadI).</text>
</comment>
<comment type="subcellular location">
    <subcellularLocation>
        <location evidence="1">Cytoplasm</location>
    </subcellularLocation>
</comment>
<comment type="similarity">
    <text evidence="1">In the N-terminal section; belongs to the enoyl-CoA hydratase/isomerase family.</text>
</comment>
<comment type="similarity">
    <text evidence="1">In the central section; belongs to the 3-hydroxyacyl-CoA dehydrogenase family.</text>
</comment>
<reference key="1">
    <citation type="journal article" date="2006" name="Mol. Microbiol.">
        <title>Role of pathogenicity island-associated integrases in the genome plasticity of uropathogenic Escherichia coli strain 536.</title>
        <authorList>
            <person name="Hochhut B."/>
            <person name="Wilde C."/>
            <person name="Balling G."/>
            <person name="Middendorf B."/>
            <person name="Dobrindt U."/>
            <person name="Brzuszkiewicz E."/>
            <person name="Gottschalk G."/>
            <person name="Carniel E."/>
            <person name="Hacker J."/>
        </authorList>
    </citation>
    <scope>NUCLEOTIDE SEQUENCE [LARGE SCALE GENOMIC DNA]</scope>
    <source>
        <strain>536 / UPEC</strain>
    </source>
</reference>
<dbReference type="EC" id="4.2.1.17" evidence="1"/>
<dbReference type="EC" id="5.1.2.3" evidence="1"/>
<dbReference type="EC" id="1.1.1.35" evidence="1"/>
<dbReference type="EMBL" id="CP000247">
    <property type="protein sequence ID" value="ABG70373.1"/>
    <property type="molecule type" value="Genomic_DNA"/>
</dbReference>
<dbReference type="RefSeq" id="WP_000425020.1">
    <property type="nucleotide sequence ID" value="NC_008253.1"/>
</dbReference>
<dbReference type="SMR" id="Q0TFA6"/>
<dbReference type="KEGG" id="ecp:ECP_2379"/>
<dbReference type="HOGENOM" id="CLU_009834_16_1_6"/>
<dbReference type="UniPathway" id="UPA00659"/>
<dbReference type="Proteomes" id="UP000009182">
    <property type="component" value="Chromosome"/>
</dbReference>
<dbReference type="GO" id="GO:0005737">
    <property type="term" value="C:cytoplasm"/>
    <property type="evidence" value="ECO:0007669"/>
    <property type="project" value="UniProtKB-SubCell"/>
</dbReference>
<dbReference type="GO" id="GO:0008692">
    <property type="term" value="F:3-hydroxybutyryl-CoA epimerase activity"/>
    <property type="evidence" value="ECO:0007669"/>
    <property type="project" value="UniProtKB-UniRule"/>
</dbReference>
<dbReference type="GO" id="GO:0004300">
    <property type="term" value="F:enoyl-CoA hydratase activity"/>
    <property type="evidence" value="ECO:0007669"/>
    <property type="project" value="UniProtKB-UniRule"/>
</dbReference>
<dbReference type="GO" id="GO:0016509">
    <property type="term" value="F:long-chain-3-hydroxyacyl-CoA dehydrogenase activity"/>
    <property type="evidence" value="ECO:0007669"/>
    <property type="project" value="TreeGrafter"/>
</dbReference>
<dbReference type="GO" id="GO:0070403">
    <property type="term" value="F:NAD+ binding"/>
    <property type="evidence" value="ECO:0007669"/>
    <property type="project" value="InterPro"/>
</dbReference>
<dbReference type="GO" id="GO:0006635">
    <property type="term" value="P:fatty acid beta-oxidation"/>
    <property type="evidence" value="ECO:0007669"/>
    <property type="project" value="UniProtKB-UniRule"/>
</dbReference>
<dbReference type="CDD" id="cd06558">
    <property type="entry name" value="crotonase-like"/>
    <property type="match status" value="1"/>
</dbReference>
<dbReference type="FunFam" id="1.10.1040.50:FF:000003">
    <property type="entry name" value="Fatty acid oxidation complex subunit alpha"/>
    <property type="match status" value="1"/>
</dbReference>
<dbReference type="FunFam" id="3.90.226.10:FF:000011">
    <property type="entry name" value="Fatty acid oxidation complex subunit alpha"/>
    <property type="match status" value="1"/>
</dbReference>
<dbReference type="FunFam" id="3.40.50.720:FF:000009">
    <property type="entry name" value="Fatty oxidation complex, alpha subunit"/>
    <property type="match status" value="1"/>
</dbReference>
<dbReference type="Gene3D" id="1.10.1040.50">
    <property type="match status" value="1"/>
</dbReference>
<dbReference type="Gene3D" id="3.90.226.10">
    <property type="entry name" value="2-enoyl-CoA Hydratase, Chain A, domain 1"/>
    <property type="match status" value="1"/>
</dbReference>
<dbReference type="Gene3D" id="3.40.50.720">
    <property type="entry name" value="NAD(P)-binding Rossmann-like Domain"/>
    <property type="match status" value="1"/>
</dbReference>
<dbReference type="HAMAP" id="MF_01617">
    <property type="entry name" value="FadJ"/>
    <property type="match status" value="1"/>
</dbReference>
<dbReference type="InterPro" id="IPR006180">
    <property type="entry name" value="3-OHacyl-CoA_DH_CS"/>
</dbReference>
<dbReference type="InterPro" id="IPR006176">
    <property type="entry name" value="3-OHacyl-CoA_DH_NAD-bd"/>
</dbReference>
<dbReference type="InterPro" id="IPR006108">
    <property type="entry name" value="3HC_DH_C"/>
</dbReference>
<dbReference type="InterPro" id="IPR008927">
    <property type="entry name" value="6-PGluconate_DH-like_C_sf"/>
</dbReference>
<dbReference type="InterPro" id="IPR029045">
    <property type="entry name" value="ClpP/crotonase-like_dom_sf"/>
</dbReference>
<dbReference type="InterPro" id="IPR001753">
    <property type="entry name" value="Enoyl-CoA_hydra/iso"/>
</dbReference>
<dbReference type="InterPro" id="IPR050136">
    <property type="entry name" value="FA_oxidation_alpha_subunit"/>
</dbReference>
<dbReference type="InterPro" id="IPR012802">
    <property type="entry name" value="FadJ"/>
</dbReference>
<dbReference type="InterPro" id="IPR036291">
    <property type="entry name" value="NAD(P)-bd_dom_sf"/>
</dbReference>
<dbReference type="NCBIfam" id="TIGR02440">
    <property type="entry name" value="FadJ"/>
    <property type="match status" value="1"/>
</dbReference>
<dbReference type="NCBIfam" id="NF008363">
    <property type="entry name" value="PRK11154.1"/>
    <property type="match status" value="1"/>
</dbReference>
<dbReference type="PANTHER" id="PTHR43612">
    <property type="entry name" value="TRIFUNCTIONAL ENZYME SUBUNIT ALPHA"/>
    <property type="match status" value="1"/>
</dbReference>
<dbReference type="PANTHER" id="PTHR43612:SF3">
    <property type="entry name" value="TRIFUNCTIONAL ENZYME SUBUNIT ALPHA, MITOCHONDRIAL"/>
    <property type="match status" value="1"/>
</dbReference>
<dbReference type="Pfam" id="PF00725">
    <property type="entry name" value="3HCDH"/>
    <property type="match status" value="1"/>
</dbReference>
<dbReference type="Pfam" id="PF02737">
    <property type="entry name" value="3HCDH_N"/>
    <property type="match status" value="1"/>
</dbReference>
<dbReference type="Pfam" id="PF00378">
    <property type="entry name" value="ECH_1"/>
    <property type="match status" value="1"/>
</dbReference>
<dbReference type="SUPFAM" id="SSF48179">
    <property type="entry name" value="6-phosphogluconate dehydrogenase C-terminal domain-like"/>
    <property type="match status" value="2"/>
</dbReference>
<dbReference type="SUPFAM" id="SSF52096">
    <property type="entry name" value="ClpP/crotonase"/>
    <property type="match status" value="1"/>
</dbReference>
<dbReference type="SUPFAM" id="SSF51735">
    <property type="entry name" value="NAD(P)-binding Rossmann-fold domains"/>
    <property type="match status" value="1"/>
</dbReference>
<dbReference type="PROSITE" id="PS00067">
    <property type="entry name" value="3HCDH"/>
    <property type="match status" value="1"/>
</dbReference>
<evidence type="ECO:0000255" key="1">
    <source>
        <dbReference type="HAMAP-Rule" id="MF_01617"/>
    </source>
</evidence>
<proteinExistence type="inferred from homology"/>
<gene>
    <name evidence="1" type="primary">fadJ</name>
    <name type="ordered locus">ECP_2379</name>
</gene>
<feature type="chain" id="PRO_0000273983" description="Fatty acid oxidation complex subunit alpha">
    <location>
        <begin position="1"/>
        <end position="714"/>
    </location>
</feature>
<feature type="region of interest" description="Enoyl-CoA hydratase" evidence="1">
    <location>
        <begin position="1"/>
        <end position="190"/>
    </location>
</feature>
<feature type="region of interest" description="3-hydroxyacyl-CoA dehydrogenase" evidence="1">
    <location>
        <begin position="306"/>
        <end position="714"/>
    </location>
</feature>
<feature type="site" description="Important for catalytic activity" evidence="1">
    <location>
        <position position="118"/>
    </location>
</feature>
<feature type="site" description="Important for catalytic activity" evidence="1">
    <location>
        <position position="140"/>
    </location>
</feature>
<sequence>MEMASAFTLNVRLDNIAIITIDVPGEKMNTLKAEFASQVRAIIKQLRENKELRGVVFVSAKPDNFIAGADINMIGNCKTAQEAEVLARQGQQLMAEIHALPIPVIAAIHGACLGGGLELALACHGRVCTDDPKTVLGLPEVQLGLLPGSGGTQRLPRLIGVSTALEMILTGKQLRAKQAVKLGLVDDVVPHSILLEAAVELAKQDRPSSRPLPVRERILAGPLGRALLFKMVGKKTEHKTQGNYPATERILEVVETGLAQGTSSGYDAEARAFGELAMTPQSQALRNIFFASTEVKKDPGSDAPPAPLNSVGILGGGLMGGGIAYVTACKAGLPVRIKDINPQGINHALKYSWDQLEGKVRRRHLKASERDKQLALISGTTDYCGFAHRDLIIEAVFENLELKQQMVAEVEQNCATHTIFASNTSSLPIGDIAAHAARPEQVIGLHFFSPVEKMPLVEIIPHASTSAQTIATTVKLAKKQGKTPIVVRDKAGFYVNRILAPYINEAIRMLTEGERIEHIDTALVKFGFPVGPIQLLDEVGIDTGTKIMPVLEAAYGERFSAPANVVSSILNDDRKGRKNGRGFYLYGQKGRKSKKQVDPAIYPLIGAQGQGRLSAPQVAERCVMLMLNEAVCCLDEQVIRSVRDGDIGAVFGIGFPPFLGGPFRYIDSLGAGEVVAIMQRLATQYGSRFTPCNRFVEMSERGESFWKTTATDLQ</sequence>